<reference key="1">
    <citation type="journal article" date="2003" name="Genome Res.">
        <title>Comparative complete genome sequence analysis of the amino acid replacements responsible for the thermostability of Corynebacterium efficiens.</title>
        <authorList>
            <person name="Nishio Y."/>
            <person name="Nakamura Y."/>
            <person name="Kawarabayasi Y."/>
            <person name="Usuda Y."/>
            <person name="Kimura E."/>
            <person name="Sugimoto S."/>
            <person name="Matsui K."/>
            <person name="Yamagishi A."/>
            <person name="Kikuchi H."/>
            <person name="Ikeo K."/>
            <person name="Gojobori T."/>
        </authorList>
    </citation>
    <scope>NUCLEOTIDE SEQUENCE [LARGE SCALE GENOMIC DNA]</scope>
    <source>
        <strain>DSM 44549 / YS-314 / AJ 12310 / JCM 11189 / NBRC 100395</strain>
    </source>
</reference>
<gene>
    <name evidence="1" type="primary">metK</name>
    <name type="ordered locus">CE1723</name>
</gene>
<accession>Q8FT48</accession>
<feature type="chain" id="PRO_0000174512" description="S-adenosylmethionine synthase">
    <location>
        <begin position="1"/>
        <end position="407"/>
    </location>
</feature>
<feature type="region of interest" description="Flexible loop" evidence="1">
    <location>
        <begin position="103"/>
        <end position="113"/>
    </location>
</feature>
<feature type="region of interest" description="Disordered" evidence="2">
    <location>
        <begin position="108"/>
        <end position="131"/>
    </location>
</feature>
<feature type="binding site" description="in other chain" evidence="1">
    <location>
        <position position="19"/>
    </location>
    <ligand>
        <name>ATP</name>
        <dbReference type="ChEBI" id="CHEBI:30616"/>
        <note>ligand shared between two neighboring subunits</note>
    </ligand>
</feature>
<feature type="binding site" evidence="1">
    <location>
        <position position="21"/>
    </location>
    <ligand>
        <name>Mg(2+)</name>
        <dbReference type="ChEBI" id="CHEBI:18420"/>
    </ligand>
</feature>
<feature type="binding site" evidence="1">
    <location>
        <position position="47"/>
    </location>
    <ligand>
        <name>K(+)</name>
        <dbReference type="ChEBI" id="CHEBI:29103"/>
    </ligand>
</feature>
<feature type="binding site" description="in other chain" evidence="1">
    <location>
        <position position="60"/>
    </location>
    <ligand>
        <name>L-methionine</name>
        <dbReference type="ChEBI" id="CHEBI:57844"/>
        <note>ligand shared between two neighboring subunits</note>
    </ligand>
</feature>
<feature type="binding site" description="in other chain" evidence="1">
    <location>
        <position position="103"/>
    </location>
    <ligand>
        <name>L-methionine</name>
        <dbReference type="ChEBI" id="CHEBI:57844"/>
        <note>ligand shared between two neighboring subunits</note>
    </ligand>
</feature>
<feature type="binding site" description="in other chain" evidence="1">
    <location>
        <begin position="178"/>
        <end position="180"/>
    </location>
    <ligand>
        <name>ATP</name>
        <dbReference type="ChEBI" id="CHEBI:30616"/>
        <note>ligand shared between two neighboring subunits</note>
    </ligand>
</feature>
<feature type="binding site" evidence="1">
    <location>
        <position position="258"/>
    </location>
    <ligand>
        <name>ATP</name>
        <dbReference type="ChEBI" id="CHEBI:30616"/>
        <note>ligand shared between two neighboring subunits</note>
    </ligand>
</feature>
<feature type="binding site" evidence="1">
    <location>
        <position position="258"/>
    </location>
    <ligand>
        <name>L-methionine</name>
        <dbReference type="ChEBI" id="CHEBI:57844"/>
        <note>ligand shared between two neighboring subunits</note>
    </ligand>
</feature>
<feature type="binding site" description="in other chain" evidence="1">
    <location>
        <begin position="264"/>
        <end position="265"/>
    </location>
    <ligand>
        <name>ATP</name>
        <dbReference type="ChEBI" id="CHEBI:30616"/>
        <note>ligand shared between two neighboring subunits</note>
    </ligand>
</feature>
<feature type="binding site" evidence="1">
    <location>
        <position position="281"/>
    </location>
    <ligand>
        <name>ATP</name>
        <dbReference type="ChEBI" id="CHEBI:30616"/>
        <note>ligand shared between two neighboring subunits</note>
    </ligand>
</feature>
<feature type="binding site" evidence="1">
    <location>
        <position position="285"/>
    </location>
    <ligand>
        <name>ATP</name>
        <dbReference type="ChEBI" id="CHEBI:30616"/>
        <note>ligand shared between two neighboring subunits</note>
    </ligand>
</feature>
<feature type="binding site" description="in other chain" evidence="1">
    <location>
        <position position="289"/>
    </location>
    <ligand>
        <name>L-methionine</name>
        <dbReference type="ChEBI" id="CHEBI:57844"/>
        <note>ligand shared between two neighboring subunits</note>
    </ligand>
</feature>
<sequence>MSQPTAVRLFTSESVTEGHPDKICDAISDTILDALLTADPLSRVAVETVVTTGIVHVVGEVRTSGYVEIPQLVRRKLIEIGFTSSDVGFDGRTCGVSVSIGEQSQEIADGVDTSQEARGDGHFEEDDRAGAGDQGLMFGYATNETPEFMPLPIAVAHRLARRLTQVRKEGIVPHLRPDGKTQVTFAYDADDNPSHLDTVVISTQHDPEVDSAWLEVQLREHVIDWVIRDAGLEHLATGEITVLINPSGSFILGGPMGDAGLTGRKIIVDTYGGMARHGGGAFSGKDPSKVDRSAAYAMRWVAKNIVAAGLADRAEVQVAYAIGRAKPVGLYVETFDTAREGLTDEQIQAAVSQVFDLRPAAIIRELDLLRPIYAQTAAYGHFGRTDLDLPWEATNRTGRLREALGLK</sequence>
<comment type="function">
    <text evidence="1">Catalyzes the formation of S-adenosylmethionine (AdoMet) from methionine and ATP. The overall synthetic reaction is composed of two sequential steps, AdoMet formation and the subsequent tripolyphosphate hydrolysis which occurs prior to release of AdoMet from the enzyme.</text>
</comment>
<comment type="catalytic activity">
    <reaction evidence="1">
        <text>L-methionine + ATP + H2O = S-adenosyl-L-methionine + phosphate + diphosphate</text>
        <dbReference type="Rhea" id="RHEA:21080"/>
        <dbReference type="ChEBI" id="CHEBI:15377"/>
        <dbReference type="ChEBI" id="CHEBI:30616"/>
        <dbReference type="ChEBI" id="CHEBI:33019"/>
        <dbReference type="ChEBI" id="CHEBI:43474"/>
        <dbReference type="ChEBI" id="CHEBI:57844"/>
        <dbReference type="ChEBI" id="CHEBI:59789"/>
        <dbReference type="EC" id="2.5.1.6"/>
    </reaction>
</comment>
<comment type="cofactor">
    <cofactor evidence="1">
        <name>Mg(2+)</name>
        <dbReference type="ChEBI" id="CHEBI:18420"/>
    </cofactor>
    <text evidence="1">Binds 2 divalent ions per subunit.</text>
</comment>
<comment type="cofactor">
    <cofactor evidence="1">
        <name>K(+)</name>
        <dbReference type="ChEBI" id="CHEBI:29103"/>
    </cofactor>
    <text evidence="1">Binds 1 potassium ion per subunit.</text>
</comment>
<comment type="pathway">
    <text evidence="1">Amino-acid biosynthesis; S-adenosyl-L-methionine biosynthesis; S-adenosyl-L-methionine from L-methionine: step 1/1.</text>
</comment>
<comment type="subunit">
    <text evidence="1">Homotetramer; dimer of dimers.</text>
</comment>
<comment type="subcellular location">
    <subcellularLocation>
        <location evidence="1">Cytoplasm</location>
    </subcellularLocation>
</comment>
<comment type="similarity">
    <text evidence="1">Belongs to the AdoMet synthase family.</text>
</comment>
<evidence type="ECO:0000255" key="1">
    <source>
        <dbReference type="HAMAP-Rule" id="MF_00086"/>
    </source>
</evidence>
<evidence type="ECO:0000256" key="2">
    <source>
        <dbReference type="SAM" id="MobiDB-lite"/>
    </source>
</evidence>
<name>METK_COREF</name>
<keyword id="KW-0067">ATP-binding</keyword>
<keyword id="KW-0963">Cytoplasm</keyword>
<keyword id="KW-0460">Magnesium</keyword>
<keyword id="KW-0479">Metal-binding</keyword>
<keyword id="KW-0547">Nucleotide-binding</keyword>
<keyword id="KW-0554">One-carbon metabolism</keyword>
<keyword id="KW-0630">Potassium</keyword>
<keyword id="KW-1185">Reference proteome</keyword>
<keyword id="KW-0808">Transferase</keyword>
<dbReference type="EC" id="2.5.1.6" evidence="1"/>
<dbReference type="EMBL" id="BA000035">
    <property type="protein sequence ID" value="BAC18533.1"/>
    <property type="molecule type" value="Genomic_DNA"/>
</dbReference>
<dbReference type="RefSeq" id="WP_011075575.1">
    <property type="nucleotide sequence ID" value="NC_004369.1"/>
</dbReference>
<dbReference type="SMR" id="Q8FT48"/>
<dbReference type="STRING" id="196164.gene:10742144"/>
<dbReference type="KEGG" id="cef:CE1723"/>
<dbReference type="eggNOG" id="COG0192">
    <property type="taxonomic scope" value="Bacteria"/>
</dbReference>
<dbReference type="HOGENOM" id="CLU_041802_1_1_11"/>
<dbReference type="OrthoDB" id="9801686at2"/>
<dbReference type="UniPathway" id="UPA00315">
    <property type="reaction ID" value="UER00080"/>
</dbReference>
<dbReference type="Proteomes" id="UP000001409">
    <property type="component" value="Chromosome"/>
</dbReference>
<dbReference type="GO" id="GO:0005737">
    <property type="term" value="C:cytoplasm"/>
    <property type="evidence" value="ECO:0007669"/>
    <property type="project" value="UniProtKB-SubCell"/>
</dbReference>
<dbReference type="GO" id="GO:0005524">
    <property type="term" value="F:ATP binding"/>
    <property type="evidence" value="ECO:0007669"/>
    <property type="project" value="UniProtKB-UniRule"/>
</dbReference>
<dbReference type="GO" id="GO:0000287">
    <property type="term" value="F:magnesium ion binding"/>
    <property type="evidence" value="ECO:0007669"/>
    <property type="project" value="UniProtKB-UniRule"/>
</dbReference>
<dbReference type="GO" id="GO:0004478">
    <property type="term" value="F:methionine adenosyltransferase activity"/>
    <property type="evidence" value="ECO:0007669"/>
    <property type="project" value="UniProtKB-UniRule"/>
</dbReference>
<dbReference type="GO" id="GO:0006730">
    <property type="term" value="P:one-carbon metabolic process"/>
    <property type="evidence" value="ECO:0007669"/>
    <property type="project" value="UniProtKB-KW"/>
</dbReference>
<dbReference type="GO" id="GO:0006556">
    <property type="term" value="P:S-adenosylmethionine biosynthetic process"/>
    <property type="evidence" value="ECO:0007669"/>
    <property type="project" value="UniProtKB-UniRule"/>
</dbReference>
<dbReference type="CDD" id="cd18079">
    <property type="entry name" value="S-AdoMet_synt"/>
    <property type="match status" value="1"/>
</dbReference>
<dbReference type="FunFam" id="3.30.300.10:FF:000003">
    <property type="entry name" value="S-adenosylmethionine synthase"/>
    <property type="match status" value="1"/>
</dbReference>
<dbReference type="Gene3D" id="3.30.300.10">
    <property type="match status" value="3"/>
</dbReference>
<dbReference type="HAMAP" id="MF_00086">
    <property type="entry name" value="S_AdoMet_synth1"/>
    <property type="match status" value="1"/>
</dbReference>
<dbReference type="InterPro" id="IPR022631">
    <property type="entry name" value="ADOMET_SYNTHASE_CS"/>
</dbReference>
<dbReference type="InterPro" id="IPR022630">
    <property type="entry name" value="S-AdoMet_synt_C"/>
</dbReference>
<dbReference type="InterPro" id="IPR022629">
    <property type="entry name" value="S-AdoMet_synt_central"/>
</dbReference>
<dbReference type="InterPro" id="IPR022628">
    <property type="entry name" value="S-AdoMet_synt_N"/>
</dbReference>
<dbReference type="InterPro" id="IPR002133">
    <property type="entry name" value="S-AdoMet_synthetase"/>
</dbReference>
<dbReference type="InterPro" id="IPR022636">
    <property type="entry name" value="S-AdoMet_synthetase_sfam"/>
</dbReference>
<dbReference type="NCBIfam" id="TIGR01034">
    <property type="entry name" value="metK"/>
    <property type="match status" value="1"/>
</dbReference>
<dbReference type="PANTHER" id="PTHR11964">
    <property type="entry name" value="S-ADENOSYLMETHIONINE SYNTHETASE"/>
    <property type="match status" value="1"/>
</dbReference>
<dbReference type="Pfam" id="PF02773">
    <property type="entry name" value="S-AdoMet_synt_C"/>
    <property type="match status" value="1"/>
</dbReference>
<dbReference type="Pfam" id="PF02772">
    <property type="entry name" value="S-AdoMet_synt_M"/>
    <property type="match status" value="1"/>
</dbReference>
<dbReference type="Pfam" id="PF00438">
    <property type="entry name" value="S-AdoMet_synt_N"/>
    <property type="match status" value="1"/>
</dbReference>
<dbReference type="PIRSF" id="PIRSF000497">
    <property type="entry name" value="MAT"/>
    <property type="match status" value="1"/>
</dbReference>
<dbReference type="SUPFAM" id="SSF55973">
    <property type="entry name" value="S-adenosylmethionine synthetase"/>
    <property type="match status" value="3"/>
</dbReference>
<dbReference type="PROSITE" id="PS00376">
    <property type="entry name" value="ADOMET_SYNTHASE_1"/>
    <property type="match status" value="1"/>
</dbReference>
<dbReference type="PROSITE" id="PS00377">
    <property type="entry name" value="ADOMET_SYNTHASE_2"/>
    <property type="match status" value="1"/>
</dbReference>
<organism>
    <name type="scientific">Corynebacterium efficiens (strain DSM 44549 / YS-314 / AJ 12310 / JCM 11189 / NBRC 100395)</name>
    <dbReference type="NCBI Taxonomy" id="196164"/>
    <lineage>
        <taxon>Bacteria</taxon>
        <taxon>Bacillati</taxon>
        <taxon>Actinomycetota</taxon>
        <taxon>Actinomycetes</taxon>
        <taxon>Mycobacteriales</taxon>
        <taxon>Corynebacteriaceae</taxon>
        <taxon>Corynebacterium</taxon>
    </lineage>
</organism>
<protein>
    <recommendedName>
        <fullName evidence="1">S-adenosylmethionine synthase</fullName>
        <shortName evidence="1">AdoMet synthase</shortName>
        <ecNumber evidence="1">2.5.1.6</ecNumber>
    </recommendedName>
    <alternativeName>
        <fullName evidence="1">MAT</fullName>
    </alternativeName>
    <alternativeName>
        <fullName evidence="1">Methionine adenosyltransferase</fullName>
    </alternativeName>
</protein>
<proteinExistence type="inferred from homology"/>